<organism>
    <name type="scientific">Phlebotomus papatasi</name>
    <name type="common">Sandfly</name>
    <dbReference type="NCBI Taxonomy" id="29031"/>
    <lineage>
        <taxon>Eukaryota</taxon>
        <taxon>Metazoa</taxon>
        <taxon>Ecdysozoa</taxon>
        <taxon>Arthropoda</taxon>
        <taxon>Hexapoda</taxon>
        <taxon>Insecta</taxon>
        <taxon>Pterygota</taxon>
        <taxon>Neoptera</taxon>
        <taxon>Endopterygota</taxon>
        <taxon>Diptera</taxon>
        <taxon>Nematocera</taxon>
        <taxon>Psychodoidea</taxon>
        <taxon>Psychodidae</taxon>
        <taxon>Phlebotomus</taxon>
        <taxon>Phlebotomus</taxon>
    </lineage>
</organism>
<gene>
    <name type="primary">RpL17</name>
</gene>
<feature type="chain" id="PRO_0000323418" description="Large ribosomal subunit protein uL22">
    <location>
        <begin position="1"/>
        <end position="186"/>
    </location>
</feature>
<feature type="region of interest" description="Disordered" evidence="1">
    <location>
        <begin position="159"/>
        <end position="186"/>
    </location>
</feature>
<feature type="compositionally biased region" description="Basic and acidic residues" evidence="1">
    <location>
        <begin position="177"/>
        <end position="186"/>
    </location>
</feature>
<evidence type="ECO:0000256" key="1">
    <source>
        <dbReference type="SAM" id="MobiDB-lite"/>
    </source>
</evidence>
<evidence type="ECO:0000305" key="2"/>
<sequence length="186" mass="21693">MGRYAREPDNATKSCKSRGSHLRVHFKNTHEAANAIKHMPLRRAQRFLKNVVEKKECVPFRRFNGGVGRCAQAKQWKTTQGRWPKKSAEFLLQLLRNAESNADYKGLDVDRLVIDHIQVNRAPCLRRRTYRAHGRINPYMSSPCHIEVILTEKEEVVAKATDEEPTKKKLSKKKLQRQKEKMMRSE</sequence>
<proteinExistence type="evidence at transcript level"/>
<keyword id="KW-0687">Ribonucleoprotein</keyword>
<keyword id="KW-0689">Ribosomal protein</keyword>
<protein>
    <recommendedName>
        <fullName evidence="2">Large ribosomal subunit protein uL22</fullName>
    </recommendedName>
    <alternativeName>
        <fullName>60S ribosomal protein L17</fullName>
    </alternativeName>
</protein>
<dbReference type="EMBL" id="EU045355">
    <property type="protein sequence ID" value="ABV44752.1"/>
    <property type="molecule type" value="mRNA"/>
</dbReference>
<dbReference type="SMR" id="A8CAG3"/>
<dbReference type="EnsemblMetazoa" id="PPAI012834-RA">
    <property type="protein sequence ID" value="PPAI012834-PA"/>
    <property type="gene ID" value="PPAI012834"/>
</dbReference>
<dbReference type="EnsemblMetazoa" id="PPAPM1_012323.R19833">
    <property type="protein sequence ID" value="PPAPM1_012323.P19833"/>
    <property type="gene ID" value="PPAPM1_012323"/>
</dbReference>
<dbReference type="VEuPathDB" id="VectorBase:PPAI012834"/>
<dbReference type="VEuPathDB" id="VectorBase:PPAPM1_012323"/>
<dbReference type="OrthoDB" id="10254664at2759"/>
<dbReference type="Proteomes" id="UP000092462">
    <property type="component" value="Unassembled WGS sequence"/>
</dbReference>
<dbReference type="GO" id="GO:0022625">
    <property type="term" value="C:cytosolic large ribosomal subunit"/>
    <property type="evidence" value="ECO:0007669"/>
    <property type="project" value="TreeGrafter"/>
</dbReference>
<dbReference type="GO" id="GO:0003735">
    <property type="term" value="F:structural constituent of ribosome"/>
    <property type="evidence" value="ECO:0007669"/>
    <property type="project" value="InterPro"/>
</dbReference>
<dbReference type="GO" id="GO:0002181">
    <property type="term" value="P:cytoplasmic translation"/>
    <property type="evidence" value="ECO:0007669"/>
    <property type="project" value="TreeGrafter"/>
</dbReference>
<dbReference type="CDD" id="cd00336">
    <property type="entry name" value="Ribosomal_L22"/>
    <property type="match status" value="1"/>
</dbReference>
<dbReference type="FunFam" id="3.90.470.10:FF:000003">
    <property type="entry name" value="60S ribosomal protein L17"/>
    <property type="match status" value="1"/>
</dbReference>
<dbReference type="Gene3D" id="3.90.470.10">
    <property type="entry name" value="Ribosomal protein L22/L17"/>
    <property type="match status" value="1"/>
</dbReference>
<dbReference type="InterPro" id="IPR001063">
    <property type="entry name" value="Ribosomal_uL22"/>
</dbReference>
<dbReference type="InterPro" id="IPR018260">
    <property type="entry name" value="Ribosomal_uL22_CS"/>
</dbReference>
<dbReference type="InterPro" id="IPR005721">
    <property type="entry name" value="Ribosomal_uL22_euk/arc"/>
</dbReference>
<dbReference type="InterPro" id="IPR036394">
    <property type="entry name" value="Ribosomal_uL22_sf"/>
</dbReference>
<dbReference type="NCBIfam" id="NF003260">
    <property type="entry name" value="PRK04223.1"/>
    <property type="match status" value="1"/>
</dbReference>
<dbReference type="NCBIfam" id="TIGR01038">
    <property type="entry name" value="uL22_arch_euk"/>
    <property type="match status" value="1"/>
</dbReference>
<dbReference type="PANTHER" id="PTHR11593">
    <property type="entry name" value="60S RIBOSOMAL PROTEIN L17"/>
    <property type="match status" value="1"/>
</dbReference>
<dbReference type="PANTHER" id="PTHR11593:SF10">
    <property type="entry name" value="60S RIBOSOMAL PROTEIN L17"/>
    <property type="match status" value="1"/>
</dbReference>
<dbReference type="Pfam" id="PF00237">
    <property type="entry name" value="Ribosomal_L22"/>
    <property type="match status" value="1"/>
</dbReference>
<dbReference type="SUPFAM" id="SSF54843">
    <property type="entry name" value="Ribosomal protein L22"/>
    <property type="match status" value="1"/>
</dbReference>
<dbReference type="PROSITE" id="PS00464">
    <property type="entry name" value="RIBOSOMAL_L22"/>
    <property type="match status" value="1"/>
</dbReference>
<accession>A8CAG3</accession>
<reference key="1">
    <citation type="journal article" date="2007" name="BMC Genomics">
        <title>Exploring the midgut transcriptome of Phlebotomus papatasi: comparative analysis of expression profiles of sugar-fed, blood-fed and Leishmania-major-infected sandflies.</title>
        <authorList>
            <person name="Ramalho-Ortigao M."/>
            <person name="Jochim R.C."/>
            <person name="Anderson J.M."/>
            <person name="Lawyer P.G."/>
            <person name="Pham V.M."/>
            <person name="Kamhawi S."/>
            <person name="Valenzuela J.G."/>
        </authorList>
    </citation>
    <scope>NUCLEOTIDE SEQUENCE [LARGE SCALE MRNA]</scope>
    <source>
        <tissue>Midgut</tissue>
    </source>
</reference>
<comment type="similarity">
    <text evidence="2">Belongs to the universal ribosomal protein uL22 family.</text>
</comment>
<name>RL17_PHLPP</name>